<comment type="function">
    <text evidence="1">Catalyzes the isomerization of D-galactaro-1,5-lactone to D-galactaro-1,4-lactone. This is a step in the oxidative degradation pathway of D-galacturonate, which allows A.tumefaciens to utilize D-galacturonate as a sole carbon source.</text>
</comment>
<comment type="catalytic activity">
    <reaction evidence="1">
        <text>D-galactaro-1,5-lactone = D-galactaro-1,4-lactone</text>
        <dbReference type="Rhea" id="RHEA:45580"/>
        <dbReference type="ChEBI" id="CHEBI:83383"/>
        <dbReference type="ChEBI" id="CHEBI:85317"/>
        <dbReference type="EC" id="5.4.1.4"/>
    </reaction>
</comment>
<comment type="cofactor">
    <text evidence="1">Does not require a metal cofactor.</text>
</comment>
<comment type="biophysicochemical properties">
    <kinetics>
        <KM evidence="1">5.3 mM for D-galactaro-1,5-lactone</KM>
        <text>kcat is 440 sec(-1).</text>
    </kinetics>
</comment>
<comment type="pathway">
    <text evidence="1">Carbohydrate acid metabolism; D-galacturonate degradation via prokaryotic oxidative pathway.</text>
</comment>
<comment type="similarity">
    <text evidence="2">Belongs to the metallo-dependent hydrolases superfamily.</text>
</comment>
<accession>A9CEQ7</accession>
<organism>
    <name type="scientific">Agrobacterium fabrum (strain C58 / ATCC 33970)</name>
    <name type="common">Agrobacterium tumefaciens (strain C58)</name>
    <dbReference type="NCBI Taxonomy" id="176299"/>
    <lineage>
        <taxon>Bacteria</taxon>
        <taxon>Pseudomonadati</taxon>
        <taxon>Pseudomonadota</taxon>
        <taxon>Alphaproteobacteria</taxon>
        <taxon>Hyphomicrobiales</taxon>
        <taxon>Rhizobiaceae</taxon>
        <taxon>Rhizobium/Agrobacterium group</taxon>
        <taxon>Agrobacterium</taxon>
        <taxon>Agrobacterium tumefaciens complex</taxon>
    </lineage>
</organism>
<keyword id="KW-0002">3D-structure</keyword>
<keyword id="KW-0413">Isomerase</keyword>
<keyword id="KW-1185">Reference proteome</keyword>
<dbReference type="EC" id="5.4.1.4" evidence="1"/>
<dbReference type="EMBL" id="AE007870">
    <property type="protein sequence ID" value="AAK90248.1"/>
    <property type="molecule type" value="Genomic_DNA"/>
</dbReference>
<dbReference type="PIR" id="AD2942">
    <property type="entry name" value="AD2942"/>
</dbReference>
<dbReference type="PIR" id="F98340">
    <property type="entry name" value="F98340"/>
</dbReference>
<dbReference type="RefSeq" id="NP_357463.1">
    <property type="nucleotide sequence ID" value="NC_003063.2"/>
</dbReference>
<dbReference type="RefSeq" id="WP_010972788.1">
    <property type="nucleotide sequence ID" value="NC_003063.2"/>
</dbReference>
<dbReference type="PDB" id="4MUP">
    <property type="method" value="X-ray"/>
    <property type="resolution" value="1.60 A"/>
    <property type="chains" value="A/B/C=1-292"/>
</dbReference>
<dbReference type="PDBsum" id="4MUP"/>
<dbReference type="SMR" id="A9CEQ7"/>
<dbReference type="STRING" id="176299.Atu3138"/>
<dbReference type="DNASU" id="1140387"/>
<dbReference type="EnsemblBacteria" id="AAK90248">
    <property type="protein sequence ID" value="AAK90248"/>
    <property type="gene ID" value="Atu3138"/>
</dbReference>
<dbReference type="GeneID" id="1140387"/>
<dbReference type="KEGG" id="atu:Atu3138"/>
<dbReference type="PATRIC" id="fig|176299.10.peg.2983"/>
<dbReference type="eggNOG" id="COG3618">
    <property type="taxonomic scope" value="Bacteria"/>
</dbReference>
<dbReference type="HOGENOM" id="CLU_064039_2_1_5"/>
<dbReference type="OrthoDB" id="9787654at2"/>
<dbReference type="PhylomeDB" id="A9CEQ7"/>
<dbReference type="BioCyc" id="AGRO:ATU3138-MONOMER"/>
<dbReference type="BioCyc" id="MetaCyc:MONOMER-19230"/>
<dbReference type="BRENDA" id="5.4.1.4">
    <property type="organism ID" value="200"/>
</dbReference>
<dbReference type="UniPathway" id="UPA01050"/>
<dbReference type="EvolutionaryTrace" id="A9CEQ7"/>
<dbReference type="Proteomes" id="UP000000813">
    <property type="component" value="Chromosome linear"/>
</dbReference>
<dbReference type="GO" id="GO:0016787">
    <property type="term" value="F:hydrolase activity"/>
    <property type="evidence" value="ECO:0007669"/>
    <property type="project" value="InterPro"/>
</dbReference>
<dbReference type="GO" id="GO:0016853">
    <property type="term" value="F:isomerase activity"/>
    <property type="evidence" value="ECO:0007669"/>
    <property type="project" value="UniProtKB-KW"/>
</dbReference>
<dbReference type="CDD" id="cd01311">
    <property type="entry name" value="PDC_hydrolase"/>
    <property type="match status" value="1"/>
</dbReference>
<dbReference type="Gene3D" id="3.20.20.140">
    <property type="entry name" value="Metal-dependent hydrolases"/>
    <property type="match status" value="1"/>
</dbReference>
<dbReference type="InterPro" id="IPR006680">
    <property type="entry name" value="Amidohydro-rel"/>
</dbReference>
<dbReference type="InterPro" id="IPR052358">
    <property type="entry name" value="Aro_Compnd_Degr_Hydrolases"/>
</dbReference>
<dbReference type="InterPro" id="IPR047874">
    <property type="entry name" value="GLI/LigI"/>
</dbReference>
<dbReference type="InterPro" id="IPR032466">
    <property type="entry name" value="Metal_Hydrolase"/>
</dbReference>
<dbReference type="PANTHER" id="PTHR35563">
    <property type="entry name" value="BARREL METAL-DEPENDENT HYDROLASE, PUTATIVE (AFU_ORTHOLOGUE AFUA_1G16240)-RELATED"/>
    <property type="match status" value="1"/>
</dbReference>
<dbReference type="PANTHER" id="PTHR35563:SF2">
    <property type="entry name" value="BARREL METAL-DEPENDENT HYDROLASE, PUTATIVE (AFU_ORTHOLOGUE AFUA_1G16240)-RELATED"/>
    <property type="match status" value="1"/>
</dbReference>
<dbReference type="Pfam" id="PF04909">
    <property type="entry name" value="Amidohydro_2"/>
    <property type="match status" value="1"/>
</dbReference>
<dbReference type="SUPFAM" id="SSF51556">
    <property type="entry name" value="Metallo-dependent hydrolases"/>
    <property type="match status" value="1"/>
</dbReference>
<evidence type="ECO:0000269" key="1">
    <source>
    </source>
</evidence>
<evidence type="ECO:0000305" key="2"/>
<evidence type="ECO:0007829" key="3">
    <source>
        <dbReference type="PDB" id="4MUP"/>
    </source>
</evidence>
<sequence>MSELVRKLSGTAPNPAFPRGAVDTQMHMYLPGYPALPGGPGLPPGALPGPEDYRRLMQWLGIDRVIITQGNAHQRDNGNTLACVAEMGEAAHAVVIIDATTTEKDMEKLTAAGTVGARIMDLPGGAVNLSELDAVDERAHAADWMVAVQFDGNGLLDHLPRLQKIRSRWVFDHHGKFFKGIRTDGPEMAALLKLIDRGNLWFKFAGVYESSRKSWPYADVAAFSRVIAAHAPERIVWGTNWPHNSVRETAAYPDDARLAELTLGWLPDEAARHRALVENPEALFKLSPVKAT</sequence>
<reference key="1">
    <citation type="journal article" date="2001" name="Science">
        <title>The genome of the natural genetic engineer Agrobacterium tumefaciens C58.</title>
        <authorList>
            <person name="Wood D.W."/>
            <person name="Setubal J.C."/>
            <person name="Kaul R."/>
            <person name="Monks D.E."/>
            <person name="Kitajima J.P."/>
            <person name="Okura V.K."/>
            <person name="Zhou Y."/>
            <person name="Chen L."/>
            <person name="Wood G.E."/>
            <person name="Almeida N.F. Jr."/>
            <person name="Woo L."/>
            <person name="Chen Y."/>
            <person name="Paulsen I.T."/>
            <person name="Eisen J.A."/>
            <person name="Karp P.D."/>
            <person name="Bovee D. Sr."/>
            <person name="Chapman P."/>
            <person name="Clendenning J."/>
            <person name="Deatherage G."/>
            <person name="Gillet W."/>
            <person name="Grant C."/>
            <person name="Kutyavin T."/>
            <person name="Levy R."/>
            <person name="Li M.-J."/>
            <person name="McClelland E."/>
            <person name="Palmieri A."/>
            <person name="Raymond C."/>
            <person name="Rouse G."/>
            <person name="Saenphimmachak C."/>
            <person name="Wu Z."/>
            <person name="Romero P."/>
            <person name="Gordon D."/>
            <person name="Zhang S."/>
            <person name="Yoo H."/>
            <person name="Tao Y."/>
            <person name="Biddle P."/>
            <person name="Jung M."/>
            <person name="Krespan W."/>
            <person name="Perry M."/>
            <person name="Gordon-Kamm B."/>
            <person name="Liao L."/>
            <person name="Kim S."/>
            <person name="Hendrick C."/>
            <person name="Zhao Z.-Y."/>
            <person name="Dolan M."/>
            <person name="Chumley F."/>
            <person name="Tingey S.V."/>
            <person name="Tomb J.-F."/>
            <person name="Gordon M.P."/>
            <person name="Olson M.V."/>
            <person name="Nester E.W."/>
        </authorList>
    </citation>
    <scope>NUCLEOTIDE SEQUENCE [LARGE SCALE GENOMIC DNA]</scope>
    <source>
        <strain>C58 / ATCC 33970</strain>
    </source>
</reference>
<reference key="2">
    <citation type="journal article" date="2001" name="Science">
        <title>Genome sequence of the plant pathogen and biotechnology agent Agrobacterium tumefaciens C58.</title>
        <authorList>
            <person name="Goodner B."/>
            <person name="Hinkle G."/>
            <person name="Gattung S."/>
            <person name="Miller N."/>
            <person name="Blanchard M."/>
            <person name="Qurollo B."/>
            <person name="Goldman B.S."/>
            <person name="Cao Y."/>
            <person name="Askenazi M."/>
            <person name="Halling C."/>
            <person name="Mullin L."/>
            <person name="Houmiel K."/>
            <person name="Gordon J."/>
            <person name="Vaudin M."/>
            <person name="Iartchouk O."/>
            <person name="Epp A."/>
            <person name="Liu F."/>
            <person name="Wollam C."/>
            <person name="Allinger M."/>
            <person name="Doughty D."/>
            <person name="Scott C."/>
            <person name="Lappas C."/>
            <person name="Markelz B."/>
            <person name="Flanagan C."/>
            <person name="Crowell C."/>
            <person name="Gurson J."/>
            <person name="Lomo C."/>
            <person name="Sear C."/>
            <person name="Strub G."/>
            <person name="Cielo C."/>
            <person name="Slater S."/>
        </authorList>
    </citation>
    <scope>NUCLEOTIDE SEQUENCE [LARGE SCALE GENOMIC DNA]</scope>
    <source>
        <strain>C58 / ATCC 33970</strain>
    </source>
</reference>
<reference key="3">
    <citation type="journal article" date="2014" name="Biochemistry">
        <title>Galactaro delta-lactone isomerase: lactone isomerization by a member of the amidohydrolase superfamily.</title>
        <authorList>
            <person name="Bouvier J.T."/>
            <person name="Groninger-Poe F.P."/>
            <person name="Vetting M."/>
            <person name="Almo S.C."/>
            <person name="Gerlt J.A."/>
        </authorList>
    </citation>
    <scope>X-RAY CRYSTALLOGRAPHY (1.60 ANGSTROMS)</scope>
    <scope>FUNCTION</scope>
    <scope>CATALYTIC ACTIVITY</scope>
    <scope>KINETIC PARAMETERS</scope>
    <scope>PATHWAY</scope>
    <scope>MUTAGENESIS OF ASN-240</scope>
    <source>
        <strain>C58 / ATCC 33970</strain>
    </source>
</reference>
<proteinExistence type="evidence at protein level"/>
<name>GLI_AGRFC</name>
<feature type="chain" id="PRO_0000429432" description="D-galactarolactone isomerase">
    <location>
        <begin position="1"/>
        <end position="292"/>
    </location>
</feature>
<feature type="mutagenesis site" description="28-fold decrease in enzymatic activity. Does not gain the ability to hydrolyze D-galactaro-1,5-lactone or D-galactaro-1,4-lactone." evidence="1">
    <original>N</original>
    <variation>D</variation>
    <location>
        <position position="240"/>
    </location>
</feature>
<feature type="strand" evidence="3">
    <location>
        <begin position="22"/>
        <end position="26"/>
    </location>
</feature>
<feature type="strand" evidence="3">
    <location>
        <begin position="44"/>
        <end position="46"/>
    </location>
</feature>
<feature type="helix" evidence="3">
    <location>
        <begin position="50"/>
        <end position="60"/>
    </location>
</feature>
<feature type="strand" evidence="3">
    <location>
        <begin position="64"/>
        <end position="68"/>
    </location>
</feature>
<feature type="helix" evidence="3">
    <location>
        <begin position="71"/>
        <end position="73"/>
    </location>
</feature>
<feature type="helix" evidence="3">
    <location>
        <begin position="78"/>
        <end position="87"/>
    </location>
</feature>
<feature type="helix" evidence="3">
    <location>
        <begin position="88"/>
        <end position="90"/>
    </location>
</feature>
<feature type="strand" evidence="3">
    <location>
        <begin position="91"/>
        <end position="95"/>
    </location>
</feature>
<feature type="helix" evidence="3">
    <location>
        <begin position="103"/>
        <end position="111"/>
    </location>
</feature>
<feature type="strand" evidence="3">
    <location>
        <begin position="114"/>
        <end position="120"/>
    </location>
</feature>
<feature type="helix" evidence="3">
    <location>
        <begin position="129"/>
        <end position="131"/>
    </location>
</feature>
<feature type="helix" evidence="3">
    <location>
        <begin position="132"/>
        <end position="141"/>
    </location>
</feature>
<feature type="strand" evidence="3">
    <location>
        <begin position="145"/>
        <end position="149"/>
    </location>
</feature>
<feature type="helix" evidence="3">
    <location>
        <begin position="152"/>
        <end position="154"/>
    </location>
</feature>
<feature type="helix" evidence="3">
    <location>
        <begin position="155"/>
        <end position="163"/>
    </location>
</feature>
<feature type="strand" evidence="3">
    <location>
        <begin position="167"/>
        <end position="171"/>
    </location>
</feature>
<feature type="helix" evidence="3">
    <location>
        <begin position="173"/>
        <end position="176"/>
    </location>
</feature>
<feature type="helix" evidence="3">
    <location>
        <begin position="186"/>
        <end position="197"/>
    </location>
</feature>
<feature type="strand" evidence="3">
    <location>
        <begin position="200"/>
        <end position="204"/>
    </location>
</feature>
<feature type="helix" evidence="3">
    <location>
        <begin position="207"/>
        <end position="209"/>
    </location>
</feature>
<feature type="helix" evidence="3">
    <location>
        <begin position="218"/>
        <end position="230"/>
    </location>
</feature>
<feature type="helix" evidence="3">
    <location>
        <begin position="232"/>
        <end position="234"/>
    </location>
</feature>
<feature type="strand" evidence="3">
    <location>
        <begin position="235"/>
        <end position="237"/>
    </location>
</feature>
<feature type="helix" evidence="3">
    <location>
        <begin position="249"/>
        <end position="251"/>
    </location>
</feature>
<feature type="helix" evidence="3">
    <location>
        <begin position="255"/>
        <end position="263"/>
    </location>
</feature>
<feature type="strand" evidence="3">
    <location>
        <begin position="266"/>
        <end position="268"/>
    </location>
</feature>
<feature type="helix" evidence="3">
    <location>
        <begin position="269"/>
        <end position="276"/>
    </location>
</feature>
<feature type="helix" evidence="3">
    <location>
        <begin position="278"/>
        <end position="284"/>
    </location>
</feature>
<gene>
    <name type="ordered locus">Atu3138</name>
</gene>
<protein>
    <recommendedName>
        <fullName>D-galactarolactone isomerase</fullName>
        <shortName>GLI</shortName>
        <ecNumber evidence="1">5.4.1.4</ecNumber>
    </recommendedName>
    <alternativeName>
        <fullName>Galactaro delta-lactone isomerase</fullName>
    </alternativeName>
</protein>